<evidence type="ECO:0000255" key="1"/>
<evidence type="ECO:0000269" key="2">
    <source>
    </source>
</evidence>
<evidence type="ECO:0000269" key="3">
    <source>
    </source>
</evidence>
<evidence type="ECO:0000269" key="4">
    <source>
    </source>
</evidence>
<evidence type="ECO:0000305" key="5"/>
<accession>P40003</accession>
<accession>D3DLP2</accession>
<protein>
    <recommendedName>
        <fullName>Biogenesis of lysosome-related organelles complex 1 subunit VAB2</fullName>
        <shortName>BLOC-1 subunit VAB2</shortName>
    </recommendedName>
    <alternativeName>
        <fullName>VAC8-binding protein 2</fullName>
    </alternativeName>
</protein>
<organism>
    <name type="scientific">Saccharomyces cerevisiae (strain ATCC 204508 / S288c)</name>
    <name type="common">Baker's yeast</name>
    <dbReference type="NCBI Taxonomy" id="559292"/>
    <lineage>
        <taxon>Eukaryota</taxon>
        <taxon>Fungi</taxon>
        <taxon>Dikarya</taxon>
        <taxon>Ascomycota</taxon>
        <taxon>Saccharomycotina</taxon>
        <taxon>Saccharomycetes</taxon>
        <taxon>Saccharomycetales</taxon>
        <taxon>Saccharomycetaceae</taxon>
        <taxon>Saccharomyces</taxon>
    </lineage>
</organism>
<dbReference type="EMBL" id="U18530">
    <property type="protein sequence ID" value="AAB64482.1"/>
    <property type="molecule type" value="Genomic_DNA"/>
</dbReference>
<dbReference type="EMBL" id="BK006939">
    <property type="protein sequence ID" value="DAA07646.1"/>
    <property type="molecule type" value="Genomic_DNA"/>
</dbReference>
<dbReference type="PIR" id="S50454">
    <property type="entry name" value="S50454"/>
</dbReference>
<dbReference type="RefSeq" id="NP_010911.3">
    <property type="nucleotide sequence ID" value="NM_001178820.3"/>
</dbReference>
<dbReference type="SMR" id="P40003"/>
<dbReference type="BioGRID" id="36726">
    <property type="interactions" value="63"/>
</dbReference>
<dbReference type="ComplexPortal" id="CPX-1153">
    <property type="entry name" value="BLOC-1 complex"/>
</dbReference>
<dbReference type="DIP" id="DIP-5277N"/>
<dbReference type="FunCoup" id="P40003">
    <property type="interactions" value="54"/>
</dbReference>
<dbReference type="IntAct" id="P40003">
    <property type="interactions" value="12"/>
</dbReference>
<dbReference type="MINT" id="P40003"/>
<dbReference type="STRING" id="4932.YEL005C"/>
<dbReference type="iPTMnet" id="P40003"/>
<dbReference type="PaxDb" id="4932-YEL005C"/>
<dbReference type="PeptideAtlas" id="P40003"/>
<dbReference type="EnsemblFungi" id="YEL005C_mRNA">
    <property type="protein sequence ID" value="YEL005C"/>
    <property type="gene ID" value="YEL005C"/>
</dbReference>
<dbReference type="GeneID" id="856713"/>
<dbReference type="KEGG" id="sce:YEL005C"/>
<dbReference type="AGR" id="SGD:S000000731"/>
<dbReference type="SGD" id="S000000731">
    <property type="gene designation" value="VAB2"/>
</dbReference>
<dbReference type="VEuPathDB" id="FungiDB:YEL005C"/>
<dbReference type="eggNOG" id="ENOG502S95F">
    <property type="taxonomic scope" value="Eukaryota"/>
</dbReference>
<dbReference type="HOGENOM" id="CLU_086126_0_0_1"/>
<dbReference type="InParanoid" id="P40003"/>
<dbReference type="OMA" id="HICITEP"/>
<dbReference type="OrthoDB" id="4036527at2759"/>
<dbReference type="BioCyc" id="YEAST:G3O-30134-MONOMER"/>
<dbReference type="BioGRID-ORCS" id="856713">
    <property type="hits" value="0 hits in 10 CRISPR screens"/>
</dbReference>
<dbReference type="PRO" id="PR:P40003"/>
<dbReference type="Proteomes" id="UP000002311">
    <property type="component" value="Chromosome V"/>
</dbReference>
<dbReference type="RNAct" id="P40003">
    <property type="molecule type" value="protein"/>
</dbReference>
<dbReference type="GO" id="GO:0031083">
    <property type="term" value="C:BLOC-1 complex"/>
    <property type="evidence" value="ECO:0000314"/>
    <property type="project" value="SGD"/>
</dbReference>
<dbReference type="GO" id="GO:0005737">
    <property type="term" value="C:cytoplasm"/>
    <property type="evidence" value="ECO:0007005"/>
    <property type="project" value="SGD"/>
</dbReference>
<dbReference type="GO" id="GO:0005768">
    <property type="term" value="C:endosome"/>
    <property type="evidence" value="ECO:0000314"/>
    <property type="project" value="ComplexPortal"/>
</dbReference>
<dbReference type="GO" id="GO:0005773">
    <property type="term" value="C:vacuole"/>
    <property type="evidence" value="ECO:0007669"/>
    <property type="project" value="UniProtKB-SubCell"/>
</dbReference>
<dbReference type="GO" id="GO:0007032">
    <property type="term" value="P:endosome organization"/>
    <property type="evidence" value="ECO:0000315"/>
    <property type="project" value="SGD"/>
</dbReference>
<dbReference type="GO" id="GO:0032880">
    <property type="term" value="P:regulation of protein localization"/>
    <property type="evidence" value="ECO:0000315"/>
    <property type="project" value="SGD"/>
</dbReference>
<name>VAB2_YEAST</name>
<comment type="function">
    <text evidence="4">Component of the biogenesis of lysosome-related organelles complex-1 (BLOC-1) involved in endosomal cargo sorting.</text>
</comment>
<comment type="subunit">
    <text evidence="2 4">Component of the biogenesis of lysosome-related organelles complex-1 (BLOC-1) composed of at least BLI1, BLS1, CNL1, KXD1, SNN1 and VAB2. Interacts with VAC8.</text>
</comment>
<comment type="interaction">
    <interactant intactId="EBI-22275">
        <id>P40003</id>
    </interactant>
    <interactant intactId="EBI-28775">
        <id>P48232</id>
        <label>SNN1</label>
    </interactant>
    <organismsDiffer>false</organismsDiffer>
    <experiments>4</experiments>
</comment>
<comment type="interaction">
    <interactant intactId="EBI-22275">
        <id>P40003</id>
    </interactant>
    <interactant intactId="EBI-20212">
        <id>P39968</id>
        <label>VAC8</label>
    </interactant>
    <organismsDiffer>false</organismsDiffer>
    <experiments>3</experiments>
</comment>
<comment type="subcellular location">
    <subcellularLocation>
        <location evidence="3">Cytoplasmic vesicle</location>
    </subcellularLocation>
    <subcellularLocation>
        <location evidence="3">Cytoplasm</location>
    </subcellularLocation>
    <subcellularLocation>
        <location evidence="3">Vacuole</location>
    </subcellularLocation>
</comment>
<comment type="similarity">
    <text evidence="5">Belongs to the VAB2 family.</text>
</comment>
<sequence length="282" mass="31365">MVADLTKGILKWKSRIEFDAVGSSSYYEELKGLPPLASHKKLTQAAIFNSTKYELLQVKKDILSIYEVVSRDIDEERNQMQQIELQLKKSLKKVEHSYKNVLKQRASTNCINGNDRLLANAEKKIGSLNEELACVNDIVSDIVNNLTALNANLPKKAQLLKDDSINVAHYPLLFDFLHKSCPKSIIATSEASIHENASPSPLLEHDELPAESINSFYGENELQSDSLAPLQTHDDNISSCKKILPPKFNTTSGPSIETNFENISADGLTYTKCSLKNSISLT</sequence>
<keyword id="KW-0175">Coiled coil</keyword>
<keyword id="KW-0963">Cytoplasm</keyword>
<keyword id="KW-0968">Cytoplasmic vesicle</keyword>
<keyword id="KW-1185">Reference proteome</keyword>
<keyword id="KW-0813">Transport</keyword>
<keyword id="KW-0926">Vacuole</keyword>
<proteinExistence type="evidence at protein level"/>
<gene>
    <name type="primary">VAB2</name>
    <name type="synonym">VAB31</name>
    <name type="ordered locus">YEL005C</name>
</gene>
<reference key="1">
    <citation type="journal article" date="1997" name="Nature">
        <title>The nucleotide sequence of Saccharomyces cerevisiae chromosome V.</title>
        <authorList>
            <person name="Dietrich F.S."/>
            <person name="Mulligan J.T."/>
            <person name="Hennessy K.M."/>
            <person name="Yelton M.A."/>
            <person name="Allen E."/>
            <person name="Araujo R."/>
            <person name="Aviles E."/>
            <person name="Berno A."/>
            <person name="Brennan T."/>
            <person name="Carpenter J."/>
            <person name="Chen E."/>
            <person name="Cherry J.M."/>
            <person name="Chung E."/>
            <person name="Duncan M."/>
            <person name="Guzman E."/>
            <person name="Hartzell G."/>
            <person name="Hunicke-Smith S."/>
            <person name="Hyman R.W."/>
            <person name="Kayser A."/>
            <person name="Komp C."/>
            <person name="Lashkari D."/>
            <person name="Lew H."/>
            <person name="Lin D."/>
            <person name="Mosedale D."/>
            <person name="Nakahara K."/>
            <person name="Namath A."/>
            <person name="Norgren R."/>
            <person name="Oefner P."/>
            <person name="Oh C."/>
            <person name="Petel F.X."/>
            <person name="Roberts D."/>
            <person name="Sehl P."/>
            <person name="Schramm S."/>
            <person name="Shogren T."/>
            <person name="Smith V."/>
            <person name="Taylor P."/>
            <person name="Wei Y."/>
            <person name="Botstein D."/>
            <person name="Davis R.W."/>
        </authorList>
    </citation>
    <scope>NUCLEOTIDE SEQUENCE [LARGE SCALE GENOMIC DNA]</scope>
    <source>
        <strain>ATCC 204508 / S288c</strain>
    </source>
</reference>
<reference key="2">
    <citation type="journal article" date="2014" name="G3 (Bethesda)">
        <title>The reference genome sequence of Saccharomyces cerevisiae: Then and now.</title>
        <authorList>
            <person name="Engel S.R."/>
            <person name="Dietrich F.S."/>
            <person name="Fisk D.G."/>
            <person name="Binkley G."/>
            <person name="Balakrishnan R."/>
            <person name="Costanzo M.C."/>
            <person name="Dwight S.S."/>
            <person name="Hitz B.C."/>
            <person name="Karra K."/>
            <person name="Nash R.S."/>
            <person name="Weng S."/>
            <person name="Wong E.D."/>
            <person name="Lloyd P."/>
            <person name="Skrzypek M.S."/>
            <person name="Miyasato S.R."/>
            <person name="Simison M."/>
            <person name="Cherry J.M."/>
        </authorList>
    </citation>
    <scope>GENOME REANNOTATION</scope>
    <source>
        <strain>ATCC 204508 / S288c</strain>
    </source>
</reference>
<reference key="3">
    <citation type="journal article" date="2000" name="Mol. Biol. Cell">
        <title>Nucleus-vacuole junctions in Saccharomyces cerevisiae are formed through the direct interaction of Vac8p with Nvj1p.</title>
        <authorList>
            <person name="Pan X."/>
            <person name="Roberts P."/>
            <person name="Chen Y."/>
            <person name="Kvam E."/>
            <person name="Shulga N."/>
            <person name="Huang K."/>
            <person name="Lemmon S."/>
            <person name="Goldfarb D.S."/>
        </authorList>
    </citation>
    <scope>INTERACTION WITH VAC8</scope>
</reference>
<reference key="4">
    <citation type="journal article" date="2003" name="Nature">
        <title>Global analysis of protein localization in budding yeast.</title>
        <authorList>
            <person name="Huh W.-K."/>
            <person name="Falvo J.V."/>
            <person name="Gerke L.C."/>
            <person name="Carroll A.S."/>
            <person name="Howson R.W."/>
            <person name="Weissman J.S."/>
            <person name="O'Shea E.K."/>
        </authorList>
    </citation>
    <scope>SUBCELLULAR LOCATION [LARGE SCALE ANALYSIS]</scope>
</reference>
<reference key="5">
    <citation type="journal article" date="2011" name="Traffic">
        <title>Yeast homologues of three BLOC-1 subunits highlight KxDL proteins as conserved interactors of BLOC-1.</title>
        <authorList>
            <person name="Hayes M.J."/>
            <person name="Bryon K."/>
            <person name="Satkurunathan J."/>
            <person name="Levine T.P."/>
        </authorList>
    </citation>
    <scope>IDENTIFICATION IN THE BLOC-1 COMPLEX</scope>
    <scope>FUNCTION</scope>
</reference>
<feature type="chain" id="PRO_0000202618" description="Biogenesis of lysosome-related organelles complex 1 subunit VAB2">
    <location>
        <begin position="1"/>
        <end position="282"/>
    </location>
</feature>
<feature type="coiled-coil region" evidence="1">
    <location>
        <begin position="64"/>
        <end position="140"/>
    </location>
</feature>